<sequence>MYLIPTVIEQTNRGERAYDIYSRLLKDRIVFLGSPIDDQVANSIVSQLLFLAAEDPDKDISLYINSPGGSITAGLAIYDTMQFIKPDVSTICIGMAASMGAFLLAAGAKGKRFALPNSEIMIHQPLGGAQGQATEIEIAAKRILFLRDKLNRILSENTGQPIEVIERDTDRDNFMTAQKAMEYGIIDRVLTRADEK</sequence>
<proteinExistence type="inferred from homology"/>
<gene>
    <name evidence="1" type="primary">clpP</name>
    <name type="ordered locus">GK3062</name>
</gene>
<name>CLPP_GEOKA</name>
<accession>Q5KVD9</accession>
<reference key="1">
    <citation type="journal article" date="2004" name="Nucleic Acids Res.">
        <title>Thermoadaptation trait revealed by the genome sequence of thermophilic Geobacillus kaustophilus.</title>
        <authorList>
            <person name="Takami H."/>
            <person name="Takaki Y."/>
            <person name="Chee G.-J."/>
            <person name="Nishi S."/>
            <person name="Shimamura S."/>
            <person name="Suzuki H."/>
            <person name="Matsui S."/>
            <person name="Uchiyama I."/>
        </authorList>
    </citation>
    <scope>NUCLEOTIDE SEQUENCE [LARGE SCALE GENOMIC DNA]</scope>
    <source>
        <strain>HTA426</strain>
    </source>
</reference>
<protein>
    <recommendedName>
        <fullName evidence="1">ATP-dependent Clp protease proteolytic subunit</fullName>
        <ecNumber evidence="1">3.4.21.92</ecNumber>
    </recommendedName>
    <alternativeName>
        <fullName evidence="1">Endopeptidase Clp</fullName>
    </alternativeName>
</protein>
<evidence type="ECO:0000255" key="1">
    <source>
        <dbReference type="HAMAP-Rule" id="MF_00444"/>
    </source>
</evidence>
<dbReference type="EC" id="3.4.21.92" evidence="1"/>
<dbReference type="EMBL" id="BA000043">
    <property type="protein sequence ID" value="BAD77347.1"/>
    <property type="molecule type" value="Genomic_DNA"/>
</dbReference>
<dbReference type="RefSeq" id="WP_011232532.1">
    <property type="nucleotide sequence ID" value="NC_006510.1"/>
</dbReference>
<dbReference type="SMR" id="Q5KVD9"/>
<dbReference type="STRING" id="235909.GK3062"/>
<dbReference type="MEROPS" id="S14.001"/>
<dbReference type="GeneID" id="32064935"/>
<dbReference type="KEGG" id="gka:GK3062"/>
<dbReference type="eggNOG" id="COG0740">
    <property type="taxonomic scope" value="Bacteria"/>
</dbReference>
<dbReference type="HOGENOM" id="CLU_058707_3_2_9"/>
<dbReference type="Proteomes" id="UP000001172">
    <property type="component" value="Chromosome"/>
</dbReference>
<dbReference type="GO" id="GO:0005737">
    <property type="term" value="C:cytoplasm"/>
    <property type="evidence" value="ECO:0007669"/>
    <property type="project" value="UniProtKB-SubCell"/>
</dbReference>
<dbReference type="GO" id="GO:0009368">
    <property type="term" value="C:endopeptidase Clp complex"/>
    <property type="evidence" value="ECO:0007669"/>
    <property type="project" value="TreeGrafter"/>
</dbReference>
<dbReference type="GO" id="GO:0004176">
    <property type="term" value="F:ATP-dependent peptidase activity"/>
    <property type="evidence" value="ECO:0007669"/>
    <property type="project" value="InterPro"/>
</dbReference>
<dbReference type="GO" id="GO:0051117">
    <property type="term" value="F:ATPase binding"/>
    <property type="evidence" value="ECO:0007669"/>
    <property type="project" value="TreeGrafter"/>
</dbReference>
<dbReference type="GO" id="GO:0004252">
    <property type="term" value="F:serine-type endopeptidase activity"/>
    <property type="evidence" value="ECO:0007669"/>
    <property type="project" value="UniProtKB-UniRule"/>
</dbReference>
<dbReference type="GO" id="GO:0006515">
    <property type="term" value="P:protein quality control for misfolded or incompletely synthesized proteins"/>
    <property type="evidence" value="ECO:0007669"/>
    <property type="project" value="TreeGrafter"/>
</dbReference>
<dbReference type="CDD" id="cd07017">
    <property type="entry name" value="S14_ClpP_2"/>
    <property type="match status" value="1"/>
</dbReference>
<dbReference type="FunFam" id="3.90.226.10:FF:000001">
    <property type="entry name" value="ATP-dependent Clp protease proteolytic subunit"/>
    <property type="match status" value="1"/>
</dbReference>
<dbReference type="Gene3D" id="3.90.226.10">
    <property type="entry name" value="2-enoyl-CoA Hydratase, Chain A, domain 1"/>
    <property type="match status" value="1"/>
</dbReference>
<dbReference type="HAMAP" id="MF_00444">
    <property type="entry name" value="ClpP"/>
    <property type="match status" value="1"/>
</dbReference>
<dbReference type="InterPro" id="IPR001907">
    <property type="entry name" value="ClpP"/>
</dbReference>
<dbReference type="InterPro" id="IPR029045">
    <property type="entry name" value="ClpP/crotonase-like_dom_sf"/>
</dbReference>
<dbReference type="InterPro" id="IPR023562">
    <property type="entry name" value="ClpP/TepA"/>
</dbReference>
<dbReference type="InterPro" id="IPR033135">
    <property type="entry name" value="ClpP_His_AS"/>
</dbReference>
<dbReference type="InterPro" id="IPR018215">
    <property type="entry name" value="ClpP_Ser_AS"/>
</dbReference>
<dbReference type="NCBIfam" id="TIGR00493">
    <property type="entry name" value="clpP"/>
    <property type="match status" value="1"/>
</dbReference>
<dbReference type="NCBIfam" id="NF001368">
    <property type="entry name" value="PRK00277.1"/>
    <property type="match status" value="1"/>
</dbReference>
<dbReference type="NCBIfam" id="NF009205">
    <property type="entry name" value="PRK12553.1"/>
    <property type="match status" value="1"/>
</dbReference>
<dbReference type="PANTHER" id="PTHR10381">
    <property type="entry name" value="ATP-DEPENDENT CLP PROTEASE PROTEOLYTIC SUBUNIT"/>
    <property type="match status" value="1"/>
</dbReference>
<dbReference type="PANTHER" id="PTHR10381:SF70">
    <property type="entry name" value="ATP-DEPENDENT CLP PROTEASE PROTEOLYTIC SUBUNIT"/>
    <property type="match status" value="1"/>
</dbReference>
<dbReference type="Pfam" id="PF00574">
    <property type="entry name" value="CLP_protease"/>
    <property type="match status" value="1"/>
</dbReference>
<dbReference type="PRINTS" id="PR00127">
    <property type="entry name" value="CLPPROTEASEP"/>
</dbReference>
<dbReference type="SUPFAM" id="SSF52096">
    <property type="entry name" value="ClpP/crotonase"/>
    <property type="match status" value="1"/>
</dbReference>
<dbReference type="PROSITE" id="PS00382">
    <property type="entry name" value="CLP_PROTEASE_HIS"/>
    <property type="match status" value="1"/>
</dbReference>
<dbReference type="PROSITE" id="PS00381">
    <property type="entry name" value="CLP_PROTEASE_SER"/>
    <property type="match status" value="1"/>
</dbReference>
<comment type="function">
    <text evidence="1">Cleaves peptides in various proteins in a process that requires ATP hydrolysis. Has a chymotrypsin-like activity. Plays a major role in the degradation of misfolded proteins. ClpXP is involved in the complete degradation of the Site-2 clipped anti-sigma-W factor RsiW. This results in the release of SigW and the transcription activation of the genes under the control of the sigma-W factor (By similarity).</text>
</comment>
<comment type="catalytic activity">
    <reaction evidence="1">
        <text>Hydrolysis of proteins to small peptides in the presence of ATP and magnesium. alpha-casein is the usual test substrate. In the absence of ATP, only oligopeptides shorter than five residues are hydrolyzed (such as succinyl-Leu-Tyr-|-NHMec, and Leu-Tyr-Leu-|-Tyr-Trp, in which cleavage of the -Tyr-|-Leu- and -Tyr-|-Trp bonds also occurs).</text>
        <dbReference type="EC" id="3.4.21.92"/>
    </reaction>
</comment>
<comment type="subunit">
    <text evidence="1">Fourteen ClpP subunits assemble into 2 heptameric rings which stack back to back to give a disk-like structure with a central cavity, resembling the structure of eukaryotic proteasomes.</text>
</comment>
<comment type="subcellular location">
    <subcellularLocation>
        <location evidence="1">Cytoplasm</location>
    </subcellularLocation>
</comment>
<comment type="similarity">
    <text evidence="1">Belongs to the peptidase S14 family.</text>
</comment>
<feature type="chain" id="PRO_0000179560" description="ATP-dependent Clp protease proteolytic subunit">
    <location>
        <begin position="1"/>
        <end position="196"/>
    </location>
</feature>
<feature type="active site" description="Nucleophile" evidence="1">
    <location>
        <position position="98"/>
    </location>
</feature>
<feature type="active site" evidence="1">
    <location>
        <position position="123"/>
    </location>
</feature>
<organism>
    <name type="scientific">Geobacillus kaustophilus (strain HTA426)</name>
    <dbReference type="NCBI Taxonomy" id="235909"/>
    <lineage>
        <taxon>Bacteria</taxon>
        <taxon>Bacillati</taxon>
        <taxon>Bacillota</taxon>
        <taxon>Bacilli</taxon>
        <taxon>Bacillales</taxon>
        <taxon>Anoxybacillaceae</taxon>
        <taxon>Geobacillus</taxon>
        <taxon>Geobacillus thermoleovorans group</taxon>
    </lineage>
</organism>
<keyword id="KW-0963">Cytoplasm</keyword>
<keyword id="KW-0378">Hydrolase</keyword>
<keyword id="KW-0645">Protease</keyword>
<keyword id="KW-1185">Reference proteome</keyword>
<keyword id="KW-0720">Serine protease</keyword>